<proteinExistence type="evidence at protein level"/>
<name>PA2HB_CERGO</name>
<organism>
    <name type="scientific">Cerrophidion godmani</name>
    <name type="common">Porthidium godmani</name>
    <name type="synonym">Bothrops godmani</name>
    <dbReference type="NCBI Taxonomy" id="44722"/>
    <lineage>
        <taxon>Eukaryota</taxon>
        <taxon>Metazoa</taxon>
        <taxon>Chordata</taxon>
        <taxon>Craniata</taxon>
        <taxon>Vertebrata</taxon>
        <taxon>Euteleostomi</taxon>
        <taxon>Lepidosauria</taxon>
        <taxon>Squamata</taxon>
        <taxon>Bifurcata</taxon>
        <taxon>Unidentata</taxon>
        <taxon>Episquamata</taxon>
        <taxon>Toxicofera</taxon>
        <taxon>Serpentes</taxon>
        <taxon>Colubroidea</taxon>
        <taxon>Viperidae</taxon>
        <taxon>Crotalinae</taxon>
        <taxon>Cerrophidion</taxon>
    </lineage>
</organism>
<feature type="signal peptide" evidence="5">
    <location>
        <begin position="1"/>
        <end position="16"/>
    </location>
</feature>
<feature type="chain" id="PRO_0000022850" description="Basic phospholipase A2 homolog Pgo-K49" evidence="8">
    <location>
        <begin position="17"/>
        <end position="137"/>
    </location>
</feature>
<feature type="region of interest" description="Important for membrane-damaging activities in eukaryotes and bacteria; heparin-binding" evidence="2">
    <location>
        <begin position="121"/>
        <end position="133"/>
    </location>
</feature>
<feature type="site" description="Important residue of the cationic membrane-docking site (MDoS)" evidence="1">
    <location>
        <position position="121"/>
    </location>
</feature>
<feature type="site" description="Important residue of the cationic membrane-docking site (MDoS)" evidence="1">
    <location>
        <position position="124"/>
    </location>
</feature>
<feature type="site" description="Hydrophobic membrane-disruption site (MDiS)" evidence="1">
    <location>
        <position position="127"/>
    </location>
</feature>
<feature type="site" description="Cationic membrane-docking site (MDoS)" evidence="1">
    <location>
        <position position="128"/>
    </location>
</feature>
<feature type="site" description="Hydrophobic membrane-disruption site (MDiS)" evidence="1">
    <location>
        <position position="130"/>
    </location>
</feature>
<feature type="site" description="Cationic membrane-docking site (MDoS)" evidence="1">
    <location>
        <position position="133"/>
    </location>
</feature>
<feature type="disulfide bond" evidence="4">
    <location>
        <begin position="42"/>
        <end position="131"/>
    </location>
</feature>
<feature type="disulfide bond" evidence="4">
    <location>
        <begin position="44"/>
        <end position="60"/>
    </location>
</feature>
<feature type="disulfide bond" evidence="4">
    <location>
        <begin position="59"/>
        <end position="111"/>
    </location>
</feature>
<feature type="disulfide bond" evidence="4">
    <location>
        <begin position="65"/>
        <end position="137"/>
    </location>
</feature>
<feature type="disulfide bond" evidence="4">
    <location>
        <begin position="66"/>
        <end position="104"/>
    </location>
</feature>
<feature type="disulfide bond" evidence="4">
    <location>
        <begin position="73"/>
        <end position="97"/>
    </location>
</feature>
<feature type="disulfide bond" evidence="4">
    <location>
        <begin position="91"/>
        <end position="102"/>
    </location>
</feature>
<evidence type="ECO:0000250" key="1">
    <source>
        <dbReference type="UniProtKB" id="I6L8L6"/>
    </source>
</evidence>
<evidence type="ECO:0000250" key="2">
    <source>
        <dbReference type="UniProtKB" id="P24605"/>
    </source>
</evidence>
<evidence type="ECO:0000250" key="3">
    <source>
        <dbReference type="UniProtKB" id="Q6JK69"/>
    </source>
</evidence>
<evidence type="ECO:0000250" key="4">
    <source>
        <dbReference type="UniProtKB" id="Q90249"/>
    </source>
</evidence>
<evidence type="ECO:0000269" key="5">
    <source>
    </source>
</evidence>
<evidence type="ECO:0000303" key="6">
    <source>
    </source>
</evidence>
<evidence type="ECO:0000305" key="7"/>
<evidence type="ECO:0000305" key="8">
    <source>
    </source>
</evidence>
<reference key="1">
    <citation type="journal article" date="2001" name="Arch. Biochem. Biophys.">
        <title>Purification, sequencing, and phylogenetic analyses of novel Lys-49 phospholipases A(2) from the venoms of rattlesnakes and other pit vipers.</title>
        <authorList>
            <person name="Tsai I.-H."/>
            <person name="Chen Y.-H."/>
            <person name="Wang Y.-M."/>
            <person name="Tu M.-C."/>
            <person name="Tu A.T."/>
        </authorList>
    </citation>
    <scope>NUCLEOTIDE SEQUENCE [MRNA]</scope>
    <scope>PROTEIN SEQUENCE OF 17-45</scope>
    <scope>MASS SPECTROMETRY</scope>
    <scope>SUBCELLULAR LOCATION</scope>
    <source>
        <tissue>Venom</tissue>
        <tissue>Venom gland</tissue>
    </source>
</reference>
<comment type="function">
    <text evidence="1 3">Snake venom phospholipase A2 homolog that lacks enzymatic activity (By similarity). Is myotoxic (By similarity). A model of myotoxic mechanism has been proposed: an apo Lys49-PLA2 is activated by the entrance of a hydrophobic molecule (e.g. fatty acid) at the hydrophobic channel of the protein leading to a reorientation of a monomer (By similarity). This reorientation causes a transition between 'inactive' to 'active' states, causing alignment of C-terminal and membrane-docking sites (MDoS) side-by-side and putting the membrane-disruption sites (MDiS) in the same plane, exposed to solvent and in a symmetric position for both monomers (By similarity). The MDoS region stabilizes the toxin on membrane by the interaction of charged residues with phospholipid head groups (By similarity). Subsequently, the MDiS region destabilizes the membrane with penetration of hydrophobic residues (By similarity). This insertion causes a disorganization of the membrane, allowing an uncontrolled influx of ions (i.e. calcium and sodium), and eventually triggering irreversible intracellular alterations and cell death (By similarity).</text>
</comment>
<comment type="subcellular location">
    <subcellularLocation>
        <location evidence="5">Secreted</location>
    </subcellularLocation>
</comment>
<comment type="tissue specificity">
    <text evidence="8">Expressed by the venom gland.</text>
</comment>
<comment type="mass spectrometry"/>
<comment type="similarity">
    <text evidence="7">Belongs to the phospholipase A2 family. Group II subfamily. K49 sub-subfamily.</text>
</comment>
<comment type="caution">
    <text evidence="7">Does not bind calcium as one of the calcium-binding sites is lost (Asp-&gt;Lys in position 64, which corresponds to 'Lys-49' in the current nomenclature).</text>
</comment>
<dbReference type="EMBL" id="AF374237">
    <property type="protein sequence ID" value="AAL39066.1"/>
    <property type="molecule type" value="mRNA"/>
</dbReference>
<dbReference type="SMR" id="Q8UVU7"/>
<dbReference type="GO" id="GO:0005576">
    <property type="term" value="C:extracellular region"/>
    <property type="evidence" value="ECO:0007669"/>
    <property type="project" value="UniProtKB-SubCell"/>
</dbReference>
<dbReference type="GO" id="GO:0005509">
    <property type="term" value="F:calcium ion binding"/>
    <property type="evidence" value="ECO:0007669"/>
    <property type="project" value="InterPro"/>
</dbReference>
<dbReference type="GO" id="GO:0047498">
    <property type="term" value="F:calcium-dependent phospholipase A2 activity"/>
    <property type="evidence" value="ECO:0007669"/>
    <property type="project" value="TreeGrafter"/>
</dbReference>
<dbReference type="GO" id="GO:0005543">
    <property type="term" value="F:phospholipid binding"/>
    <property type="evidence" value="ECO:0007669"/>
    <property type="project" value="TreeGrafter"/>
</dbReference>
<dbReference type="GO" id="GO:0090729">
    <property type="term" value="F:toxin activity"/>
    <property type="evidence" value="ECO:0007669"/>
    <property type="project" value="UniProtKB-KW"/>
</dbReference>
<dbReference type="GO" id="GO:0050482">
    <property type="term" value="P:arachidonate secretion"/>
    <property type="evidence" value="ECO:0007669"/>
    <property type="project" value="InterPro"/>
</dbReference>
<dbReference type="GO" id="GO:0016042">
    <property type="term" value="P:lipid catabolic process"/>
    <property type="evidence" value="ECO:0007669"/>
    <property type="project" value="InterPro"/>
</dbReference>
<dbReference type="GO" id="GO:0042130">
    <property type="term" value="P:negative regulation of T cell proliferation"/>
    <property type="evidence" value="ECO:0007669"/>
    <property type="project" value="TreeGrafter"/>
</dbReference>
<dbReference type="GO" id="GO:0006644">
    <property type="term" value="P:phospholipid metabolic process"/>
    <property type="evidence" value="ECO:0007669"/>
    <property type="project" value="InterPro"/>
</dbReference>
<dbReference type="CDD" id="cd00125">
    <property type="entry name" value="PLA2c"/>
    <property type="match status" value="1"/>
</dbReference>
<dbReference type="FunFam" id="1.20.90.10:FF:000001">
    <property type="entry name" value="Basic phospholipase A2 homolog"/>
    <property type="match status" value="1"/>
</dbReference>
<dbReference type="Gene3D" id="1.20.90.10">
    <property type="entry name" value="Phospholipase A2 domain"/>
    <property type="match status" value="1"/>
</dbReference>
<dbReference type="InterPro" id="IPR001211">
    <property type="entry name" value="PLipase_A2"/>
</dbReference>
<dbReference type="InterPro" id="IPR033112">
    <property type="entry name" value="PLipase_A2_Asp_AS"/>
</dbReference>
<dbReference type="InterPro" id="IPR016090">
    <property type="entry name" value="PLipase_A2_dom"/>
</dbReference>
<dbReference type="InterPro" id="IPR036444">
    <property type="entry name" value="PLipase_A2_dom_sf"/>
</dbReference>
<dbReference type="InterPro" id="IPR033113">
    <property type="entry name" value="PLipase_A2_His_AS"/>
</dbReference>
<dbReference type="PANTHER" id="PTHR11716">
    <property type="entry name" value="PHOSPHOLIPASE A2 FAMILY MEMBER"/>
    <property type="match status" value="1"/>
</dbReference>
<dbReference type="PANTHER" id="PTHR11716:SF9">
    <property type="entry name" value="PHOSPHOLIPASE A2, MEMBRANE ASSOCIATED"/>
    <property type="match status" value="1"/>
</dbReference>
<dbReference type="Pfam" id="PF00068">
    <property type="entry name" value="Phospholip_A2_1"/>
    <property type="match status" value="1"/>
</dbReference>
<dbReference type="PRINTS" id="PR00389">
    <property type="entry name" value="PHPHLIPASEA2"/>
</dbReference>
<dbReference type="SMART" id="SM00085">
    <property type="entry name" value="PA2c"/>
    <property type="match status" value="1"/>
</dbReference>
<dbReference type="SUPFAM" id="SSF48619">
    <property type="entry name" value="Phospholipase A2, PLA2"/>
    <property type="match status" value="1"/>
</dbReference>
<dbReference type="PROSITE" id="PS00119">
    <property type="entry name" value="PA2_ASP"/>
    <property type="match status" value="1"/>
</dbReference>
<dbReference type="PROSITE" id="PS00118">
    <property type="entry name" value="PA2_HIS"/>
    <property type="match status" value="1"/>
</dbReference>
<protein>
    <recommendedName>
        <fullName evidence="6">Basic phospholipase A2 homolog Pgo-K49</fullName>
        <shortName>svPLA2 homolog</shortName>
    </recommendedName>
</protein>
<accession>Q8UVU7</accession>
<sequence>MRTLLIVAVLLVGVEGSVYELGKMILQETGKNAATSYGFYGCNCGVGRRGKPKDATDRCCFVHKCCYKKLTDCNSKTDRYSYSWKDKTIVCGDNNPCLQEMCECDKAVAICLRENLNTYNKKYKIHMKFFCKKPDAC</sequence>
<keyword id="KW-0903">Direct protein sequencing</keyword>
<keyword id="KW-1015">Disulfide bond</keyword>
<keyword id="KW-0959">Myotoxin</keyword>
<keyword id="KW-0964">Secreted</keyword>
<keyword id="KW-0732">Signal</keyword>
<keyword id="KW-0800">Toxin</keyword>